<reference key="1">
    <citation type="journal article" date="2005" name="Nucleic Acids Res.">
        <title>Genome dynamics and diversity of Shigella species, the etiologic agents of bacillary dysentery.</title>
        <authorList>
            <person name="Yang F."/>
            <person name="Yang J."/>
            <person name="Zhang X."/>
            <person name="Chen L."/>
            <person name="Jiang Y."/>
            <person name="Yan Y."/>
            <person name="Tang X."/>
            <person name="Wang J."/>
            <person name="Xiong Z."/>
            <person name="Dong J."/>
            <person name="Xue Y."/>
            <person name="Zhu Y."/>
            <person name="Xu X."/>
            <person name="Sun L."/>
            <person name="Chen S."/>
            <person name="Nie H."/>
            <person name="Peng J."/>
            <person name="Xu J."/>
            <person name="Wang Y."/>
            <person name="Yuan Z."/>
            <person name="Wen Y."/>
            <person name="Yao Z."/>
            <person name="Shen Y."/>
            <person name="Qiang B."/>
            <person name="Hou Y."/>
            <person name="Yu J."/>
            <person name="Jin Q."/>
        </authorList>
    </citation>
    <scope>NUCLEOTIDE SEQUENCE [LARGE SCALE GENOMIC DNA]</scope>
    <source>
        <strain>Sd197</strain>
    </source>
</reference>
<organism>
    <name type="scientific">Shigella dysenteriae serotype 1 (strain Sd197)</name>
    <dbReference type="NCBI Taxonomy" id="300267"/>
    <lineage>
        <taxon>Bacteria</taxon>
        <taxon>Pseudomonadati</taxon>
        <taxon>Pseudomonadota</taxon>
        <taxon>Gammaproteobacteria</taxon>
        <taxon>Enterobacterales</taxon>
        <taxon>Enterobacteriaceae</taxon>
        <taxon>Shigella</taxon>
    </lineage>
</organism>
<comment type="function">
    <text evidence="1">Binds as a heterodimer with protein bS6 to the central domain of the 16S rRNA, where it helps stabilize the platform of the 30S subunit.</text>
</comment>
<comment type="subunit">
    <text evidence="1">Part of the 30S ribosomal subunit. Forms a tight heterodimer with protein bS6.</text>
</comment>
<comment type="similarity">
    <text evidence="1">Belongs to the bacterial ribosomal protein bS18 family.</text>
</comment>
<evidence type="ECO:0000255" key="1">
    <source>
        <dbReference type="HAMAP-Rule" id="MF_00270"/>
    </source>
</evidence>
<evidence type="ECO:0000305" key="2"/>
<protein>
    <recommendedName>
        <fullName evidence="1">Small ribosomal subunit protein bS18</fullName>
    </recommendedName>
    <alternativeName>
        <fullName evidence="2">30S ribosomal protein S18</fullName>
    </alternativeName>
</protein>
<feature type="chain" id="PRO_1000003611" description="Small ribosomal subunit protein bS18">
    <location>
        <begin position="1"/>
        <end position="75"/>
    </location>
</feature>
<proteinExistence type="inferred from homology"/>
<sequence>MARYFRRRKFCRFTAEGVQEIDYKDIATLKNYITESGKIVPSRITGTRAKYQRQLARAIKRARYLSLLPYTDRHQ</sequence>
<name>RS18_SHIDS</name>
<dbReference type="EMBL" id="CP000034">
    <property type="protein sequence ID" value="ABB64258.1"/>
    <property type="molecule type" value="Genomic_DNA"/>
</dbReference>
<dbReference type="RefSeq" id="WP_000135199.1">
    <property type="nucleotide sequence ID" value="NC_007606.1"/>
</dbReference>
<dbReference type="RefSeq" id="YP_405749.1">
    <property type="nucleotide sequence ID" value="NC_007606.1"/>
</dbReference>
<dbReference type="SMR" id="Q328J7"/>
<dbReference type="STRING" id="300267.SDY_4371"/>
<dbReference type="EnsemblBacteria" id="ABB64258">
    <property type="protein sequence ID" value="ABB64258"/>
    <property type="gene ID" value="SDY_4371"/>
</dbReference>
<dbReference type="GeneID" id="98186237"/>
<dbReference type="KEGG" id="sdy:SDY_4371"/>
<dbReference type="PATRIC" id="fig|300267.13.peg.5160"/>
<dbReference type="HOGENOM" id="CLU_148710_2_3_6"/>
<dbReference type="PRO" id="PR:Q328J7"/>
<dbReference type="Proteomes" id="UP000002716">
    <property type="component" value="Chromosome"/>
</dbReference>
<dbReference type="GO" id="GO:0022627">
    <property type="term" value="C:cytosolic small ribosomal subunit"/>
    <property type="evidence" value="ECO:0007669"/>
    <property type="project" value="TreeGrafter"/>
</dbReference>
<dbReference type="GO" id="GO:0070181">
    <property type="term" value="F:small ribosomal subunit rRNA binding"/>
    <property type="evidence" value="ECO:0007669"/>
    <property type="project" value="TreeGrafter"/>
</dbReference>
<dbReference type="GO" id="GO:0003735">
    <property type="term" value="F:structural constituent of ribosome"/>
    <property type="evidence" value="ECO:0007669"/>
    <property type="project" value="InterPro"/>
</dbReference>
<dbReference type="GO" id="GO:0006412">
    <property type="term" value="P:translation"/>
    <property type="evidence" value="ECO:0007669"/>
    <property type="project" value="UniProtKB-UniRule"/>
</dbReference>
<dbReference type="FunFam" id="4.10.640.10:FF:000001">
    <property type="entry name" value="30S ribosomal protein S18"/>
    <property type="match status" value="1"/>
</dbReference>
<dbReference type="Gene3D" id="4.10.640.10">
    <property type="entry name" value="Ribosomal protein S18"/>
    <property type="match status" value="1"/>
</dbReference>
<dbReference type="HAMAP" id="MF_00270">
    <property type="entry name" value="Ribosomal_bS18"/>
    <property type="match status" value="1"/>
</dbReference>
<dbReference type="InterPro" id="IPR001648">
    <property type="entry name" value="Ribosomal_bS18"/>
</dbReference>
<dbReference type="InterPro" id="IPR018275">
    <property type="entry name" value="Ribosomal_bS18_CS"/>
</dbReference>
<dbReference type="InterPro" id="IPR036870">
    <property type="entry name" value="Ribosomal_bS18_sf"/>
</dbReference>
<dbReference type="NCBIfam" id="TIGR00165">
    <property type="entry name" value="S18"/>
    <property type="match status" value="1"/>
</dbReference>
<dbReference type="PANTHER" id="PTHR13479">
    <property type="entry name" value="30S RIBOSOMAL PROTEIN S18"/>
    <property type="match status" value="1"/>
</dbReference>
<dbReference type="PANTHER" id="PTHR13479:SF40">
    <property type="entry name" value="SMALL RIBOSOMAL SUBUNIT PROTEIN BS18M"/>
    <property type="match status" value="1"/>
</dbReference>
<dbReference type="Pfam" id="PF01084">
    <property type="entry name" value="Ribosomal_S18"/>
    <property type="match status" value="1"/>
</dbReference>
<dbReference type="PRINTS" id="PR00974">
    <property type="entry name" value="RIBOSOMALS18"/>
</dbReference>
<dbReference type="SUPFAM" id="SSF46911">
    <property type="entry name" value="Ribosomal protein S18"/>
    <property type="match status" value="1"/>
</dbReference>
<dbReference type="PROSITE" id="PS00057">
    <property type="entry name" value="RIBOSOMAL_S18"/>
    <property type="match status" value="1"/>
</dbReference>
<gene>
    <name evidence="1" type="primary">rpsR</name>
    <name type="ordered locus">SDY_4371</name>
</gene>
<accession>Q328J7</accession>
<keyword id="KW-1185">Reference proteome</keyword>
<keyword id="KW-0687">Ribonucleoprotein</keyword>
<keyword id="KW-0689">Ribosomal protein</keyword>
<keyword id="KW-0694">RNA-binding</keyword>
<keyword id="KW-0699">rRNA-binding</keyword>